<keyword id="KW-0149">Chlorophyll biosynthesis</keyword>
<keyword id="KW-0963">Cytoplasm</keyword>
<keyword id="KW-0413">Isomerase</keyword>
<keyword id="KW-0627">Porphyrin biosynthesis</keyword>
<keyword id="KW-0663">Pyridoxal phosphate</keyword>
<keyword id="KW-1185">Reference proteome</keyword>
<reference key="1">
    <citation type="journal article" date="2008" name="Proc. Natl. Acad. Sci. U.S.A.">
        <title>The genome of Cyanothece 51142, a unicellular diazotrophic cyanobacterium important in the marine nitrogen cycle.</title>
        <authorList>
            <person name="Welsh E.A."/>
            <person name="Liberton M."/>
            <person name="Stoeckel J."/>
            <person name="Loh T."/>
            <person name="Elvitigala T."/>
            <person name="Wang C."/>
            <person name="Wollam A."/>
            <person name="Fulton R.S."/>
            <person name="Clifton S.W."/>
            <person name="Jacobs J.M."/>
            <person name="Aurora R."/>
            <person name="Ghosh B.K."/>
            <person name="Sherman L.A."/>
            <person name="Smith R.D."/>
            <person name="Wilson R.K."/>
            <person name="Pakrasi H.B."/>
        </authorList>
    </citation>
    <scope>NUCLEOTIDE SEQUENCE [LARGE SCALE GENOMIC DNA]</scope>
    <source>
        <strain>ATCC 51142 / BH68</strain>
    </source>
</reference>
<proteinExistence type="inferred from homology"/>
<gene>
    <name evidence="1" type="primary">hemL</name>
    <name type="ordered locus">cce_0172</name>
</gene>
<name>GSA_CROS5</name>
<feature type="chain" id="PRO_0000382301" description="Glutamate-1-semialdehyde 2,1-aminomutase">
    <location>
        <begin position="1"/>
        <end position="433"/>
    </location>
</feature>
<feature type="modified residue" description="N6-(pyridoxal phosphate)lysine" evidence="1">
    <location>
        <position position="273"/>
    </location>
</feature>
<organism>
    <name type="scientific">Crocosphaera subtropica (strain ATCC 51142 / BH68)</name>
    <name type="common">Cyanothece sp. (strain ATCC 51142)</name>
    <dbReference type="NCBI Taxonomy" id="43989"/>
    <lineage>
        <taxon>Bacteria</taxon>
        <taxon>Bacillati</taxon>
        <taxon>Cyanobacteriota</taxon>
        <taxon>Cyanophyceae</taxon>
        <taxon>Oscillatoriophycideae</taxon>
        <taxon>Chroococcales</taxon>
        <taxon>Aphanothecaceae</taxon>
        <taxon>Crocosphaera</taxon>
        <taxon>Crocosphaera subtropica</taxon>
    </lineage>
</organism>
<comment type="catalytic activity">
    <reaction evidence="1">
        <text>(S)-4-amino-5-oxopentanoate = 5-aminolevulinate</text>
        <dbReference type="Rhea" id="RHEA:14265"/>
        <dbReference type="ChEBI" id="CHEBI:57501"/>
        <dbReference type="ChEBI" id="CHEBI:356416"/>
        <dbReference type="EC" id="5.4.3.8"/>
    </reaction>
</comment>
<comment type="cofactor">
    <cofactor evidence="1">
        <name>pyridoxal 5'-phosphate</name>
        <dbReference type="ChEBI" id="CHEBI:597326"/>
    </cofactor>
</comment>
<comment type="pathway">
    <text evidence="1">Porphyrin-containing compound metabolism; protoporphyrin-IX biosynthesis; 5-aminolevulinate from L-glutamyl-tRNA(Glu): step 2/2.</text>
</comment>
<comment type="pathway">
    <text evidence="1">Porphyrin-containing compound metabolism; chlorophyll biosynthesis.</text>
</comment>
<comment type="subunit">
    <text evidence="1">Homodimer.</text>
</comment>
<comment type="subcellular location">
    <subcellularLocation>
        <location evidence="1">Cytoplasm</location>
    </subcellularLocation>
</comment>
<comment type="similarity">
    <text evidence="1">Belongs to the class-III pyridoxal-phosphate-dependent aminotransferase family. HemL subfamily.</text>
</comment>
<comment type="sequence caution" evidence="2">
    <conflict type="erroneous initiation">
        <sequence resource="EMBL-CDS" id="ACB49524"/>
    </conflict>
</comment>
<evidence type="ECO:0000255" key="1">
    <source>
        <dbReference type="HAMAP-Rule" id="MF_00375"/>
    </source>
</evidence>
<evidence type="ECO:0000305" key="2"/>
<sequence>MVSTTSLKTTKSEDIFAAAQKLMPGGVSSPVRAFKSVGGQPIVFDHVKGAYIWDVDGNQYIDYVGTWGPAICGHAHPEVIAALHDALDRGTSFGAPCLLENVLAEMVIDAVPSIEMVRFVNSGTEACMSVLRLMRAFTGRDKIIKFQGCYHGHADMFLVQAGSGVATLGLPDSPGVPKTTTANTLTAPYNDLEAVKALFAENPDEIAGVILEPVVGNSGFVVPDGGFLQGLRELTNEYGALLVFDEVMTGFRLSYGGAQEKFGVTPDLTTLGKVIGGGLPVGAYGGRKDIMSMVAPAGPMYQAGTLSGNPLAMTAGIKTLELLQKPGTYNQLEQITQQLSEGLLKIAKEAGHQVCGGYIGAMFGLFFTEGPVRNYDDAKKSDLAKFGRFHRGMLEKGVYLAPSQFEAGFTSLAHTSEDIEKTLAAAKDVLSNL</sequence>
<accession>B1X023</accession>
<dbReference type="EC" id="5.4.3.8" evidence="1"/>
<dbReference type="EMBL" id="CP000806">
    <property type="protein sequence ID" value="ACB49524.1"/>
    <property type="status" value="ALT_INIT"/>
    <property type="molecule type" value="Genomic_DNA"/>
</dbReference>
<dbReference type="RefSeq" id="WP_024750185.1">
    <property type="nucleotide sequence ID" value="NC_010546.1"/>
</dbReference>
<dbReference type="SMR" id="B1X023"/>
<dbReference type="STRING" id="43989.cce_0172"/>
<dbReference type="KEGG" id="cyt:cce_0172"/>
<dbReference type="eggNOG" id="COG0001">
    <property type="taxonomic scope" value="Bacteria"/>
</dbReference>
<dbReference type="HOGENOM" id="CLU_016922_1_5_3"/>
<dbReference type="OrthoDB" id="9807885at2"/>
<dbReference type="UniPathway" id="UPA00251">
    <property type="reaction ID" value="UER00317"/>
</dbReference>
<dbReference type="UniPathway" id="UPA00668"/>
<dbReference type="Proteomes" id="UP000001203">
    <property type="component" value="Chromosome circular"/>
</dbReference>
<dbReference type="GO" id="GO:0005737">
    <property type="term" value="C:cytoplasm"/>
    <property type="evidence" value="ECO:0007669"/>
    <property type="project" value="UniProtKB-SubCell"/>
</dbReference>
<dbReference type="GO" id="GO:0042286">
    <property type="term" value="F:glutamate-1-semialdehyde 2,1-aminomutase activity"/>
    <property type="evidence" value="ECO:0007669"/>
    <property type="project" value="UniProtKB-UniRule"/>
</dbReference>
<dbReference type="GO" id="GO:0030170">
    <property type="term" value="F:pyridoxal phosphate binding"/>
    <property type="evidence" value="ECO:0007669"/>
    <property type="project" value="InterPro"/>
</dbReference>
<dbReference type="GO" id="GO:0008483">
    <property type="term" value="F:transaminase activity"/>
    <property type="evidence" value="ECO:0007669"/>
    <property type="project" value="InterPro"/>
</dbReference>
<dbReference type="GO" id="GO:0015995">
    <property type="term" value="P:chlorophyll biosynthetic process"/>
    <property type="evidence" value="ECO:0007669"/>
    <property type="project" value="UniProtKB-UniRule"/>
</dbReference>
<dbReference type="GO" id="GO:0006782">
    <property type="term" value="P:protoporphyrinogen IX biosynthetic process"/>
    <property type="evidence" value="ECO:0007669"/>
    <property type="project" value="UniProtKB-UniRule"/>
</dbReference>
<dbReference type="CDD" id="cd00610">
    <property type="entry name" value="OAT_like"/>
    <property type="match status" value="1"/>
</dbReference>
<dbReference type="FunFam" id="3.40.640.10:FF:000021">
    <property type="entry name" value="Glutamate-1-semialdehyde 2,1-aminomutase"/>
    <property type="match status" value="1"/>
</dbReference>
<dbReference type="FunFam" id="3.90.1150.10:FF:000012">
    <property type="entry name" value="Glutamate-1-semialdehyde 2,1-aminomutase"/>
    <property type="match status" value="1"/>
</dbReference>
<dbReference type="Gene3D" id="3.90.1150.10">
    <property type="entry name" value="Aspartate Aminotransferase, domain 1"/>
    <property type="match status" value="1"/>
</dbReference>
<dbReference type="Gene3D" id="3.40.640.10">
    <property type="entry name" value="Type I PLP-dependent aspartate aminotransferase-like (Major domain)"/>
    <property type="match status" value="1"/>
</dbReference>
<dbReference type="HAMAP" id="MF_00375">
    <property type="entry name" value="HemL_aminotrans_3"/>
    <property type="match status" value="1"/>
</dbReference>
<dbReference type="InterPro" id="IPR004639">
    <property type="entry name" value="4pyrrol_synth_GluAld_NH2Trfase"/>
</dbReference>
<dbReference type="InterPro" id="IPR005814">
    <property type="entry name" value="Aminotrans_3"/>
</dbReference>
<dbReference type="InterPro" id="IPR049704">
    <property type="entry name" value="Aminotrans_3_PPA_site"/>
</dbReference>
<dbReference type="InterPro" id="IPR015424">
    <property type="entry name" value="PyrdxlP-dep_Trfase"/>
</dbReference>
<dbReference type="InterPro" id="IPR015421">
    <property type="entry name" value="PyrdxlP-dep_Trfase_major"/>
</dbReference>
<dbReference type="InterPro" id="IPR015422">
    <property type="entry name" value="PyrdxlP-dep_Trfase_small"/>
</dbReference>
<dbReference type="NCBIfam" id="TIGR00713">
    <property type="entry name" value="hemL"/>
    <property type="match status" value="1"/>
</dbReference>
<dbReference type="NCBIfam" id="NF000818">
    <property type="entry name" value="PRK00062.1"/>
    <property type="match status" value="1"/>
</dbReference>
<dbReference type="PANTHER" id="PTHR43713">
    <property type="entry name" value="GLUTAMATE-1-SEMIALDEHYDE 2,1-AMINOMUTASE"/>
    <property type="match status" value="1"/>
</dbReference>
<dbReference type="PANTHER" id="PTHR43713:SF3">
    <property type="entry name" value="GLUTAMATE-1-SEMIALDEHYDE 2,1-AMINOMUTASE 1, CHLOROPLASTIC-RELATED"/>
    <property type="match status" value="1"/>
</dbReference>
<dbReference type="Pfam" id="PF00202">
    <property type="entry name" value="Aminotran_3"/>
    <property type="match status" value="1"/>
</dbReference>
<dbReference type="SUPFAM" id="SSF53383">
    <property type="entry name" value="PLP-dependent transferases"/>
    <property type="match status" value="1"/>
</dbReference>
<dbReference type="PROSITE" id="PS00600">
    <property type="entry name" value="AA_TRANSFER_CLASS_3"/>
    <property type="match status" value="1"/>
</dbReference>
<protein>
    <recommendedName>
        <fullName evidence="1">Glutamate-1-semialdehyde 2,1-aminomutase</fullName>
        <shortName evidence="1">GSA</shortName>
        <ecNumber evidence="1">5.4.3.8</ecNumber>
    </recommendedName>
    <alternativeName>
        <fullName evidence="1">Glutamate-1-semialdehyde aminotransferase</fullName>
        <shortName evidence="1">GSA-AT</shortName>
    </alternativeName>
</protein>